<proteinExistence type="inferred from homology"/>
<gene>
    <name type="ordered locus">lp_2841</name>
</gene>
<feature type="chain" id="PRO_0000157424" description="UPF0324 membrane protein lp_2841">
    <location>
        <begin position="1"/>
        <end position="336"/>
    </location>
</feature>
<feature type="transmembrane region" description="Helical" evidence="1">
    <location>
        <begin position="5"/>
        <end position="22"/>
    </location>
</feature>
<feature type="transmembrane region" description="Helical" evidence="1">
    <location>
        <begin position="26"/>
        <end position="48"/>
    </location>
</feature>
<feature type="transmembrane region" description="Helical" evidence="1">
    <location>
        <begin position="84"/>
        <end position="106"/>
    </location>
</feature>
<feature type="transmembrane region" description="Helical" evidence="1">
    <location>
        <begin position="116"/>
        <end position="138"/>
    </location>
</feature>
<feature type="transmembrane region" description="Helical" evidence="1">
    <location>
        <begin position="150"/>
        <end position="172"/>
    </location>
</feature>
<feature type="transmembrane region" description="Helical" evidence="1">
    <location>
        <begin position="204"/>
        <end position="226"/>
    </location>
</feature>
<feature type="transmembrane region" description="Helical" evidence="1">
    <location>
        <begin position="255"/>
        <end position="277"/>
    </location>
</feature>
<feature type="transmembrane region" description="Helical" evidence="1">
    <location>
        <begin position="282"/>
        <end position="304"/>
    </location>
</feature>
<feature type="transmembrane region" description="Helical" evidence="1">
    <location>
        <begin position="311"/>
        <end position="333"/>
    </location>
</feature>
<reference key="1">
    <citation type="journal article" date="2003" name="Proc. Natl. Acad. Sci. U.S.A.">
        <title>Complete genome sequence of Lactobacillus plantarum WCFS1.</title>
        <authorList>
            <person name="Kleerebezem M."/>
            <person name="Boekhorst J."/>
            <person name="van Kranenburg R."/>
            <person name="Molenaar D."/>
            <person name="Kuipers O.P."/>
            <person name="Leer R."/>
            <person name="Tarchini R."/>
            <person name="Peters S.A."/>
            <person name="Sandbrink H.M."/>
            <person name="Fiers M.W.E.J."/>
            <person name="Stiekema W."/>
            <person name="Klein Lankhorst R.M."/>
            <person name="Bron P.A."/>
            <person name="Hoffer S.M."/>
            <person name="Nierop Groot M.N."/>
            <person name="Kerkhoven R."/>
            <person name="De Vries M."/>
            <person name="Ursing B."/>
            <person name="De Vos W.M."/>
            <person name="Siezen R.J."/>
        </authorList>
    </citation>
    <scope>NUCLEOTIDE SEQUENCE [LARGE SCALE GENOMIC DNA]</scope>
    <source>
        <strain>ATCC BAA-793 / NCIMB 8826 / WCFS1</strain>
    </source>
</reference>
<reference key="2">
    <citation type="journal article" date="2012" name="J. Bacteriol.">
        <title>Complete resequencing and reannotation of the Lactobacillus plantarum WCFS1 genome.</title>
        <authorList>
            <person name="Siezen R.J."/>
            <person name="Francke C."/>
            <person name="Renckens B."/>
            <person name="Boekhorst J."/>
            <person name="Wels M."/>
            <person name="Kleerebezem M."/>
            <person name="van Hijum S.A."/>
        </authorList>
    </citation>
    <scope>NUCLEOTIDE SEQUENCE [LARGE SCALE GENOMIC DNA]</scope>
    <scope>GENOME REANNOTATION</scope>
    <source>
        <strain>ATCC BAA-793 / NCIMB 8826 / WCFS1</strain>
    </source>
</reference>
<organism>
    <name type="scientific">Lactiplantibacillus plantarum (strain ATCC BAA-793 / NCIMB 8826 / WCFS1)</name>
    <name type="common">Lactobacillus plantarum</name>
    <dbReference type="NCBI Taxonomy" id="220668"/>
    <lineage>
        <taxon>Bacteria</taxon>
        <taxon>Bacillati</taxon>
        <taxon>Bacillota</taxon>
        <taxon>Bacilli</taxon>
        <taxon>Lactobacillales</taxon>
        <taxon>Lactobacillaceae</taxon>
        <taxon>Lactiplantibacillus</taxon>
    </lineage>
</organism>
<dbReference type="EMBL" id="AL935263">
    <property type="protein sequence ID" value="CCC79933.1"/>
    <property type="molecule type" value="Genomic_DNA"/>
</dbReference>
<dbReference type="RefSeq" id="WP_003642118.1">
    <property type="nucleotide sequence ID" value="NC_004567.2"/>
</dbReference>
<dbReference type="RefSeq" id="YP_004890447.1">
    <property type="nucleotide sequence ID" value="NC_004567.2"/>
</dbReference>
<dbReference type="STRING" id="220668.lp_2841"/>
<dbReference type="EnsemblBacteria" id="CCC79933">
    <property type="protein sequence ID" value="CCC79933"/>
    <property type="gene ID" value="lp_2841"/>
</dbReference>
<dbReference type="KEGG" id="lpl:lp_2841"/>
<dbReference type="PATRIC" id="fig|220668.9.peg.2375"/>
<dbReference type="eggNOG" id="COG2855">
    <property type="taxonomic scope" value="Bacteria"/>
</dbReference>
<dbReference type="HOGENOM" id="CLU_033541_3_0_9"/>
<dbReference type="OrthoDB" id="9811391at2"/>
<dbReference type="PhylomeDB" id="Q88TT1"/>
<dbReference type="Proteomes" id="UP000000432">
    <property type="component" value="Chromosome"/>
</dbReference>
<dbReference type="GO" id="GO:0005886">
    <property type="term" value="C:plasma membrane"/>
    <property type="evidence" value="ECO:0007669"/>
    <property type="project" value="UniProtKB-SubCell"/>
</dbReference>
<dbReference type="InterPro" id="IPR018383">
    <property type="entry name" value="UPF0324_pro"/>
</dbReference>
<dbReference type="PANTHER" id="PTHR30106">
    <property type="entry name" value="INNER MEMBRANE PROTEIN YEIH-RELATED"/>
    <property type="match status" value="1"/>
</dbReference>
<dbReference type="PANTHER" id="PTHR30106:SF1">
    <property type="entry name" value="UPF0324 MEMBRANE PROTEIN FN0533"/>
    <property type="match status" value="1"/>
</dbReference>
<dbReference type="Pfam" id="PF03601">
    <property type="entry name" value="Cons_hypoth698"/>
    <property type="match status" value="1"/>
</dbReference>
<comment type="subcellular location">
    <subcellularLocation>
        <location evidence="2">Cell membrane</location>
        <topology evidence="2">Multi-pass membrane protein</topology>
    </subcellularLocation>
</comment>
<comment type="similarity">
    <text evidence="2">Belongs to the UPF0324 family.</text>
</comment>
<accession>Q88TT1</accession>
<accession>F9URU4</accession>
<name>Y2841_LACPL</name>
<evidence type="ECO:0000255" key="1"/>
<evidence type="ECO:0000305" key="2"/>
<sequence length="336" mass="35136">MKVKGILPGLVTSLVIAIISQGLAQFVPALGAATIAILLGIIGGNTFLKQPQLGRGTKFAESKLLEYSVMLLGATMTVQTIGKIGGFGVLFILCQMTITIVGALWLGRKLGFSQSVRMLMAGGNAVCGSSAIASIAPVIDADEDDKGTVITLVNLMGTVLMLTLPVLGMAVFGGSVILKGALIGGTLQSVGQVVAAASMINQTTVQFATIFKIMRIMMLVVVVLIFGRLHQRTIENELAEDAVVSGNGNGHWLPWYVAGFLILCALNSLISLPAIIGATAHTISSWFEIIALAAIGLRLNLVNFMKAGKRLALYGLGVGTIQVVSALILITLLLQH</sequence>
<keyword id="KW-1003">Cell membrane</keyword>
<keyword id="KW-0472">Membrane</keyword>
<keyword id="KW-1185">Reference proteome</keyword>
<keyword id="KW-0812">Transmembrane</keyword>
<keyword id="KW-1133">Transmembrane helix</keyword>
<protein>
    <recommendedName>
        <fullName>UPF0324 membrane protein lp_2841</fullName>
    </recommendedName>
</protein>